<name>CDC25_YEAST</name>
<accession>P04821</accession>
<accession>D6VYV4</accession>
<comment type="function">
    <text evidence="7">Promotes the exchange of Ras-bound GDP by GTP. This protein positively controls the level of cellular cAMP at start, the stage at which the yeast cell division cycle is triggered.</text>
</comment>
<comment type="interaction">
    <interactant intactId="EBI-4237">
        <id>P04821</id>
    </interactant>
    <interactant intactId="EBI-10651">
        <id>P53094</id>
        <label>MDS3</label>
    </interactant>
    <organismsDiffer>false</organismsDiffer>
    <experiments>3</experiments>
</comment>
<comment type="interaction">
    <interactant intactId="EBI-4237">
        <id>P04821</id>
    </interactant>
    <interactant intactId="EBI-14838">
        <id>P01120</id>
        <label>RAS2</label>
    </interactant>
    <organismsDiffer>false</organismsDiffer>
    <experiments>2</experiments>
</comment>
<comment type="subcellular location">
    <subcellularLocation>
        <location evidence="8">Membrane</location>
        <topology evidence="8">Single-pass membrane protein</topology>
    </subcellularLocation>
</comment>
<comment type="miscellaneous">
    <text evidence="6">Present with 319 molecules/cell in log phase SD medium.</text>
</comment>
<reference key="1">
    <citation type="journal article" date="1987" name="Cell">
        <title>The S. cerevisiae CDC25 gene product regulates the RAS/adenylate cyclase pathway.</title>
        <authorList>
            <person name="Broek D."/>
            <person name="Toda T."/>
            <person name="Michaeli T."/>
            <person name="Levin L."/>
            <person name="Birchmeier C."/>
            <person name="Zoller M."/>
            <person name="Powers S."/>
            <person name="Wigler M."/>
        </authorList>
    </citation>
    <scope>NUCLEOTIDE SEQUENCE [GENOMIC DNA]</scope>
</reference>
<reference key="2">
    <citation type="journal article" date="1986" name="EMBO J.">
        <title>Characterization, cloning and sequence analysis of the CDC25 gene which controls the cyclic AMP level of Saccharomyces cerevisiae.</title>
        <authorList>
            <person name="Camonis J.H."/>
            <person name="Kalekine M."/>
            <person name="Gondre B."/>
            <person name="Garreau H."/>
            <person name="Boy-Marcotte E."/>
            <person name="Jacquet M."/>
        </authorList>
    </citation>
    <scope>NUCLEOTIDE SEQUENCE [GENOMIC DNA]</scope>
</reference>
<reference key="3">
    <citation type="journal article" date="1997" name="Nature">
        <title>The nucleotide sequence of Saccharomyces cerevisiae chromosome XII.</title>
        <authorList>
            <person name="Johnston M."/>
            <person name="Hillier L.W."/>
            <person name="Riles L."/>
            <person name="Albermann K."/>
            <person name="Andre B."/>
            <person name="Ansorge W."/>
            <person name="Benes V."/>
            <person name="Brueckner M."/>
            <person name="Delius H."/>
            <person name="Dubois E."/>
            <person name="Duesterhoeft A."/>
            <person name="Entian K.-D."/>
            <person name="Floeth M."/>
            <person name="Goffeau A."/>
            <person name="Hebling U."/>
            <person name="Heumann K."/>
            <person name="Heuss-Neitzel D."/>
            <person name="Hilbert H."/>
            <person name="Hilger F."/>
            <person name="Kleine K."/>
            <person name="Koetter P."/>
            <person name="Louis E.J."/>
            <person name="Messenguy F."/>
            <person name="Mewes H.-W."/>
            <person name="Miosga T."/>
            <person name="Moestl D."/>
            <person name="Mueller-Auer S."/>
            <person name="Nentwich U."/>
            <person name="Obermaier B."/>
            <person name="Piravandi E."/>
            <person name="Pohl T.M."/>
            <person name="Portetelle D."/>
            <person name="Purnelle B."/>
            <person name="Rechmann S."/>
            <person name="Rieger M."/>
            <person name="Rinke M."/>
            <person name="Rose M."/>
            <person name="Scharfe M."/>
            <person name="Scherens B."/>
            <person name="Scholler P."/>
            <person name="Schwager C."/>
            <person name="Schwarz S."/>
            <person name="Underwood A.P."/>
            <person name="Urrestarazu L.A."/>
            <person name="Vandenbol M."/>
            <person name="Verhasselt P."/>
            <person name="Vierendeels F."/>
            <person name="Voet M."/>
            <person name="Volckaert G."/>
            <person name="Voss H."/>
            <person name="Wambutt R."/>
            <person name="Wedler E."/>
            <person name="Wedler H."/>
            <person name="Zimmermann F.K."/>
            <person name="Zollner A."/>
            <person name="Hani J."/>
            <person name="Hoheisel J.D."/>
        </authorList>
    </citation>
    <scope>NUCLEOTIDE SEQUENCE [LARGE SCALE GENOMIC DNA]</scope>
    <source>
        <strain>ATCC 204508 / S288c</strain>
    </source>
</reference>
<reference key="4">
    <citation type="journal article" date="2014" name="G3 (Bethesda)">
        <title>The reference genome sequence of Saccharomyces cerevisiae: Then and now.</title>
        <authorList>
            <person name="Engel S.R."/>
            <person name="Dietrich F.S."/>
            <person name="Fisk D.G."/>
            <person name="Binkley G."/>
            <person name="Balakrishnan R."/>
            <person name="Costanzo M.C."/>
            <person name="Dwight S.S."/>
            <person name="Hitz B.C."/>
            <person name="Karra K."/>
            <person name="Nash R.S."/>
            <person name="Weng S."/>
            <person name="Wong E.D."/>
            <person name="Lloyd P."/>
            <person name="Skrzypek M.S."/>
            <person name="Miyasato S.R."/>
            <person name="Simison M."/>
            <person name="Cherry J.M."/>
        </authorList>
    </citation>
    <scope>GENOME REANNOTATION</scope>
    <source>
        <strain>ATCC 204508 / S288c</strain>
    </source>
</reference>
<reference key="5">
    <citation type="journal article" date="1986" name="Curr. Genet.">
        <title>The CDC25 'Start' gene of Saccharomyces cerevisiae: sequencing of the active C-terminal fragment and regional homologies with rhodopsin and cytochrome P450.</title>
        <authorList>
            <person name="Daniel J.H."/>
        </authorList>
    </citation>
    <scope>NUCLEOTIDE SEQUENCE [GENOMIC DNA] OF 877-1589</scope>
</reference>
<reference key="6">
    <citation type="journal article" date="1988" name="Mol. Gen. Genet.">
        <title>Domains of the Saccharomyces cerevisiae CDC25 gene controlling mitosis and meiosis.</title>
        <authorList>
            <person name="Munder T."/>
            <person name="Mink M."/>
            <person name="Kuentzel H."/>
        </authorList>
    </citation>
    <scope>DOMAINS</scope>
</reference>
<reference key="7">
    <citation type="journal article" date="1991" name="Mol. Cell. Biol.">
        <title>The CDC25 protein of Saccharomyces cerevisiae promotes exchange of guanine nucleotides bound to ras.</title>
        <authorList>
            <person name="Jones S."/>
            <person name="Vignais M.L."/>
            <person name="Broach J.R."/>
        </authorList>
    </citation>
    <scope>FUNCTION</scope>
</reference>
<reference key="8">
    <citation type="journal article" date="2003" name="Nature">
        <title>Global analysis of protein expression in yeast.</title>
        <authorList>
            <person name="Ghaemmaghami S."/>
            <person name="Huh W.-K."/>
            <person name="Bower K."/>
            <person name="Howson R.W."/>
            <person name="Belle A."/>
            <person name="Dephoure N."/>
            <person name="O'Shea E.K."/>
            <person name="Weissman J.S."/>
        </authorList>
    </citation>
    <scope>LEVEL OF PROTEIN EXPRESSION [LARGE SCALE ANALYSIS]</scope>
</reference>
<reference key="9">
    <citation type="journal article" date="2007" name="J. Proteome Res.">
        <title>Large-scale phosphorylation analysis of alpha-factor-arrested Saccharomyces cerevisiae.</title>
        <authorList>
            <person name="Li X."/>
            <person name="Gerber S.A."/>
            <person name="Rudner A.D."/>
            <person name="Beausoleil S.A."/>
            <person name="Haas W."/>
            <person name="Villen J."/>
            <person name="Elias J.E."/>
            <person name="Gygi S.P."/>
        </authorList>
    </citation>
    <scope>IDENTIFICATION BY MASS SPECTROMETRY [LARGE SCALE ANALYSIS]</scope>
    <source>
        <strain>ADR376</strain>
    </source>
</reference>
<reference key="10">
    <citation type="journal article" date="2008" name="Mol. Cell. Proteomics">
        <title>A multidimensional chromatography technology for in-depth phosphoproteome analysis.</title>
        <authorList>
            <person name="Albuquerque C.P."/>
            <person name="Smolka M.B."/>
            <person name="Payne S.H."/>
            <person name="Bafna V."/>
            <person name="Eng J."/>
            <person name="Zhou H."/>
        </authorList>
    </citation>
    <scope>PHOSPHORYLATION [LARGE SCALE ANALYSIS] AT SER-423</scope>
    <scope>IDENTIFICATION BY MASS SPECTROMETRY [LARGE SCALE ANALYSIS]</scope>
</reference>
<reference key="11">
    <citation type="journal article" date="2009" name="Science">
        <title>Global analysis of Cdk1 substrate phosphorylation sites provides insights into evolution.</title>
        <authorList>
            <person name="Holt L.J."/>
            <person name="Tuch B.B."/>
            <person name="Villen J."/>
            <person name="Johnson A.D."/>
            <person name="Gygi S.P."/>
            <person name="Morgan D.O."/>
        </authorList>
    </citation>
    <scope>PHOSPHORYLATION [LARGE SCALE ANALYSIS] AT SER-151; SER-154; SER-580; SER-596; SER-632; THR-635 AND SER-649</scope>
    <scope>IDENTIFICATION BY MASS SPECTROMETRY [LARGE SCALE ANALYSIS]</scope>
</reference>
<sequence>MSDTNTSIPNTSSAREAGNASQTPSISSSSNTSTTTNTESSSASLSSSPSTSELTSIRPIGIVVAAYDFNYPIKKDSSSQLLSVQQGETIYILNKNSSGWWDGLVIDDSNGKVNRGWFPQNFGRPLRDSHLRKHSHPMKKYSSSKSSRRSSLNSLGNSAYLHVPRNPSKSRRGSSTLSASLSNAHNAETSSGHNNTVSMNNSPFSAPNDASHITPQSSNFNSNASLSQDMTKSADGSSEMNTNAIMNNNETNLQTSGEKAGPPLVAEETIKILPLEEIEMIINGIRSNIASTWSPIPLITKTSDYKLVYYNKDLDIYCSELPLISNSIMESDDICDSEPKFPPNDHLVNLYTRDLRKNANIEDSSTRSKQSESEQNRSSLLMEKQDSKETDGNNNSINDDDNNNENNKNEFNEAGPSSLNSLSAPDLTQNIQSRVVAPSRSSILAKSDIFYHYSRDIKLWTELQDLTVYYTKTAHKMFLKENRLNFTKYFDLISDSIVFTQLGCRLMQHEIKAKSCSKEIKKIFKGLISSLSRISINSHLYFDSAFHRKKMDTMNDKDNDNQENNCSRTEGDDGKIEVDSVHDLVSVPLSGKRNVSTSTTDTLTPMRSSFSTVNENDMENFSVLGPRNSVNSVVTPRTSIQNSTLEDFSPSNKNFKSAKSIYEMVDVEFSKFLRHVQLLYFVLQSSVFSDDNTLPQLLPRFFKGSFSGGSWTNPFSTFITDEFGNATKNKAVTSNEVTASSSKNSSISRIPPKMADAIASASGYSANSETNSQIDLKASSAASGSVFTPFNRPSHNRTFSRARVSKRKKKYPLTVDTLNTMKKKSSQIFEKLNNATGEHLKIISKPKSRIRNLEINSSTYEQINQNVLLLEILENLDLSIFINLKNLIKTPSILLDLESEEFLVHAMSSVSSVLTEFFDIKQAFHDIVIRLIMTTQQTTLDDPYLFSSMRSNFPVGHHEPFKNISNTPLVKGPFHKKNEQLALSLFHVLVSQDVEFNNLEFLNNSDDFKDACEKYVEISNLACIIVDQLIEERENLLNYAARMMKNNLTAELLKGEQEKWFDIYSEDYSDDDSENDEAIIDDELGSEDYIERKAANIEKNLPWFLTSDYETSLVYDSRGKIRGGTKEALIEHLTSHELVDAAFNVTMLITFRSILTTREFFYALIYRYNLYPPEGLSYDDYNIWIEKKSNPIKCRVVNIMRTFLTQYWTRNYYEPGIPLILNFAKMVVSEKIPGAEDLLQKINEKLINENEKEPVDPKQQDSVSAVVQTTKRDNKSPIHMSSSSLPSSASSAFFRLKKLKLLDIDPYTYATQLTVLEHDLYLRITMFECLDRAWGTKYCNMGGSPNITKFIANANTLTNFVSHTIVKQADVKTRSKLTQYFVTVAQHCKELNNFSSMTAIVSALYSSPIYRLKKTWDLVSTESKDLLKNLNNLMDSKRNFVKYRELLRSVTDVACVPFFGVYLSDLTFTFVGNPDFLHNSTNIINFSKRTKIANIVEEIISFKRFHYKLKRLDDIQTVIEASLENVPHIEKQYQLSLQVEPRSGNTKGSTHASSASGTKTAKFLSEFTDDKNGNFLKLGKKKPPSRLFR</sequence>
<keyword id="KW-0131">Cell cycle</keyword>
<keyword id="KW-0132">Cell division</keyword>
<keyword id="KW-0344">Guanine-nucleotide releasing factor</keyword>
<keyword id="KW-0472">Membrane</keyword>
<keyword id="KW-0498">Mitosis</keyword>
<keyword id="KW-0597">Phosphoprotein</keyword>
<keyword id="KW-1185">Reference proteome</keyword>
<keyword id="KW-0728">SH3 domain</keyword>
<keyword id="KW-0812">Transmembrane</keyword>
<keyword id="KW-1133">Transmembrane helix</keyword>
<gene>
    <name type="primary">CDC25</name>
    <name type="synonym">CTN1</name>
    <name type="ordered locus">YLR310C</name>
    <name type="ORF">L2142.6</name>
</gene>
<dbReference type="EMBL" id="X03579">
    <property type="protein sequence ID" value="CAA27259.1"/>
    <property type="molecule type" value="Genomic_DNA"/>
</dbReference>
<dbReference type="EMBL" id="M15458">
    <property type="protein sequence ID" value="AAA34478.1"/>
    <property type="molecule type" value="Genomic_DNA"/>
</dbReference>
<dbReference type="EMBL" id="U17247">
    <property type="protein sequence ID" value="AAB67360.1"/>
    <property type="molecule type" value="Genomic_DNA"/>
</dbReference>
<dbReference type="EMBL" id="U20618">
    <property type="protein sequence ID" value="AAB64528.1"/>
    <property type="molecule type" value="Genomic_DNA"/>
</dbReference>
<dbReference type="EMBL" id="BK006945">
    <property type="protein sequence ID" value="DAA09620.1"/>
    <property type="molecule type" value="Genomic_DNA"/>
</dbReference>
<dbReference type="PIR" id="A26596">
    <property type="entry name" value="RGBYC5"/>
</dbReference>
<dbReference type="RefSeq" id="NP_013413.1">
    <property type="nucleotide sequence ID" value="NM_001182198.1"/>
</dbReference>
<dbReference type="SMR" id="P04821"/>
<dbReference type="BioGRID" id="31575">
    <property type="interactions" value="518"/>
</dbReference>
<dbReference type="DIP" id="DIP-2261N"/>
<dbReference type="FunCoup" id="P04821">
    <property type="interactions" value="371"/>
</dbReference>
<dbReference type="IntAct" id="P04821">
    <property type="interactions" value="77"/>
</dbReference>
<dbReference type="MINT" id="P04821"/>
<dbReference type="STRING" id="4932.YLR310C"/>
<dbReference type="GlyGen" id="P04821">
    <property type="glycosylation" value="4 sites, 1 O-linked glycan (3 sites)"/>
</dbReference>
<dbReference type="iPTMnet" id="P04821"/>
<dbReference type="PaxDb" id="4932-YLR310C"/>
<dbReference type="PeptideAtlas" id="P04821"/>
<dbReference type="EnsemblFungi" id="YLR310C_mRNA">
    <property type="protein sequence ID" value="YLR310C"/>
    <property type="gene ID" value="YLR310C"/>
</dbReference>
<dbReference type="GeneID" id="851019"/>
<dbReference type="KEGG" id="sce:YLR310C"/>
<dbReference type="AGR" id="SGD:S000004301"/>
<dbReference type="SGD" id="S000004301">
    <property type="gene designation" value="CDC25"/>
</dbReference>
<dbReference type="VEuPathDB" id="FungiDB:YLR310C"/>
<dbReference type="eggNOG" id="KOG3417">
    <property type="taxonomic scope" value="Eukaryota"/>
</dbReference>
<dbReference type="HOGENOM" id="CLU_002171_1_0_1"/>
<dbReference type="InParanoid" id="P04821"/>
<dbReference type="OMA" id="SEHEYSL"/>
<dbReference type="OrthoDB" id="546434at2759"/>
<dbReference type="BioCyc" id="YEAST:G3O-32396-MONOMER"/>
<dbReference type="Reactome" id="R-SCE-354192">
    <property type="pathway name" value="Integrin signaling"/>
</dbReference>
<dbReference type="Reactome" id="R-SCE-381676">
    <property type="pathway name" value="Glucagon-like Peptide-1 (GLP1) regulates insulin secretion"/>
</dbReference>
<dbReference type="Reactome" id="R-SCE-392517">
    <property type="pathway name" value="Rap1 signalling"/>
</dbReference>
<dbReference type="SABIO-RK" id="P04821"/>
<dbReference type="BioGRID-ORCS" id="851019">
    <property type="hits" value="4 hits in 10 CRISPR screens"/>
</dbReference>
<dbReference type="PRO" id="PR:P04821"/>
<dbReference type="Proteomes" id="UP000002311">
    <property type="component" value="Chromosome XII"/>
</dbReference>
<dbReference type="RNAct" id="P04821">
    <property type="molecule type" value="protein"/>
</dbReference>
<dbReference type="GO" id="GO:0005737">
    <property type="term" value="C:cytoplasm"/>
    <property type="evidence" value="ECO:0000314"/>
    <property type="project" value="SGD"/>
</dbReference>
<dbReference type="GO" id="GO:0005829">
    <property type="term" value="C:cytosol"/>
    <property type="evidence" value="ECO:0000314"/>
    <property type="project" value="SGD"/>
</dbReference>
<dbReference type="GO" id="GO:0005789">
    <property type="term" value="C:endoplasmic reticulum membrane"/>
    <property type="evidence" value="ECO:0000314"/>
    <property type="project" value="SGD"/>
</dbReference>
<dbReference type="GO" id="GO:0005634">
    <property type="term" value="C:nucleus"/>
    <property type="evidence" value="ECO:0000314"/>
    <property type="project" value="SGD"/>
</dbReference>
<dbReference type="GO" id="GO:0005886">
    <property type="term" value="C:plasma membrane"/>
    <property type="evidence" value="ECO:0000314"/>
    <property type="project" value="SGD"/>
</dbReference>
<dbReference type="GO" id="GO:0005085">
    <property type="term" value="F:guanyl-nucleotide exchange factor activity"/>
    <property type="evidence" value="ECO:0000314"/>
    <property type="project" value="SGD"/>
</dbReference>
<dbReference type="GO" id="GO:0051301">
    <property type="term" value="P:cell division"/>
    <property type="evidence" value="ECO:0007669"/>
    <property type="project" value="UniProtKB-KW"/>
</dbReference>
<dbReference type="GO" id="GO:0007265">
    <property type="term" value="P:Ras protein signal transduction"/>
    <property type="evidence" value="ECO:0000314"/>
    <property type="project" value="SGD"/>
</dbReference>
<dbReference type="GO" id="GO:0051726">
    <property type="term" value="P:regulation of cell cycle"/>
    <property type="evidence" value="ECO:0000315"/>
    <property type="project" value="SGD"/>
</dbReference>
<dbReference type="GO" id="GO:0007089">
    <property type="term" value="P:traversing start control point of mitotic cell cycle"/>
    <property type="evidence" value="ECO:0000315"/>
    <property type="project" value="SGD"/>
</dbReference>
<dbReference type="CDD" id="cd00155">
    <property type="entry name" value="RasGEF"/>
    <property type="match status" value="1"/>
</dbReference>
<dbReference type="CDD" id="cd06224">
    <property type="entry name" value="REM"/>
    <property type="match status" value="1"/>
</dbReference>
<dbReference type="CDD" id="cd11883">
    <property type="entry name" value="SH3_Sdc25"/>
    <property type="match status" value="1"/>
</dbReference>
<dbReference type="FunFam" id="1.20.870.10:FF:000020">
    <property type="entry name" value="Cell division control protein 25"/>
    <property type="match status" value="1"/>
</dbReference>
<dbReference type="FunFam" id="2.30.30.40:FF:000343">
    <property type="entry name" value="Cell division cycle-related protein"/>
    <property type="match status" value="1"/>
</dbReference>
<dbReference type="Gene3D" id="1.10.840.10">
    <property type="entry name" value="Ras guanine-nucleotide exchange factors catalytic domain"/>
    <property type="match status" value="1"/>
</dbReference>
<dbReference type="Gene3D" id="2.30.30.40">
    <property type="entry name" value="SH3 Domains"/>
    <property type="match status" value="1"/>
</dbReference>
<dbReference type="Gene3D" id="1.20.870.10">
    <property type="entry name" value="Son of sevenless (SoS) protein Chain: S domain 1"/>
    <property type="match status" value="1"/>
</dbReference>
<dbReference type="InterPro" id="IPR008937">
    <property type="entry name" value="Ras-like_GEF"/>
</dbReference>
<dbReference type="InterPro" id="IPR000651">
    <property type="entry name" value="Ras-like_Gua-exchang_fac_N"/>
</dbReference>
<dbReference type="InterPro" id="IPR019804">
    <property type="entry name" value="Ras_G-nucl-exch_fac_CS"/>
</dbReference>
<dbReference type="InterPro" id="IPR023578">
    <property type="entry name" value="Ras_GEF_dom_sf"/>
</dbReference>
<dbReference type="InterPro" id="IPR001895">
    <property type="entry name" value="RASGEF_cat_dom"/>
</dbReference>
<dbReference type="InterPro" id="IPR036964">
    <property type="entry name" value="RASGEF_cat_dom_sf"/>
</dbReference>
<dbReference type="InterPro" id="IPR036028">
    <property type="entry name" value="SH3-like_dom_sf"/>
</dbReference>
<dbReference type="InterPro" id="IPR001452">
    <property type="entry name" value="SH3_domain"/>
</dbReference>
<dbReference type="PANTHER" id="PTHR23113:SF368">
    <property type="entry name" value="CELL DIVISION CONTROL PROTEIN 25"/>
    <property type="match status" value="1"/>
</dbReference>
<dbReference type="PANTHER" id="PTHR23113">
    <property type="entry name" value="GUANINE NUCLEOTIDE EXCHANGE FACTOR"/>
    <property type="match status" value="1"/>
</dbReference>
<dbReference type="Pfam" id="PF00617">
    <property type="entry name" value="RasGEF"/>
    <property type="match status" value="1"/>
</dbReference>
<dbReference type="Pfam" id="PF00618">
    <property type="entry name" value="RasGEF_N"/>
    <property type="match status" value="1"/>
</dbReference>
<dbReference type="Pfam" id="PF00018">
    <property type="entry name" value="SH3_1"/>
    <property type="match status" value="1"/>
</dbReference>
<dbReference type="SMART" id="SM00147">
    <property type="entry name" value="RasGEF"/>
    <property type="match status" value="1"/>
</dbReference>
<dbReference type="SMART" id="SM00229">
    <property type="entry name" value="RasGEFN"/>
    <property type="match status" value="1"/>
</dbReference>
<dbReference type="SMART" id="SM00326">
    <property type="entry name" value="SH3"/>
    <property type="match status" value="1"/>
</dbReference>
<dbReference type="SUPFAM" id="SSF48366">
    <property type="entry name" value="Ras GEF"/>
    <property type="match status" value="1"/>
</dbReference>
<dbReference type="SUPFAM" id="SSF50044">
    <property type="entry name" value="SH3-domain"/>
    <property type="match status" value="1"/>
</dbReference>
<dbReference type="PROSITE" id="PS00720">
    <property type="entry name" value="RASGEF"/>
    <property type="match status" value="1"/>
</dbReference>
<dbReference type="PROSITE" id="PS50009">
    <property type="entry name" value="RASGEF_CAT"/>
    <property type="match status" value="1"/>
</dbReference>
<dbReference type="PROSITE" id="PS50212">
    <property type="entry name" value="RASGEF_NTER"/>
    <property type="match status" value="1"/>
</dbReference>
<dbReference type="PROSITE" id="PS50002">
    <property type="entry name" value="SH3"/>
    <property type="match status" value="1"/>
</dbReference>
<proteinExistence type="evidence at protein level"/>
<organism>
    <name type="scientific">Saccharomyces cerevisiae (strain ATCC 204508 / S288c)</name>
    <name type="common">Baker's yeast</name>
    <dbReference type="NCBI Taxonomy" id="559292"/>
    <lineage>
        <taxon>Eukaryota</taxon>
        <taxon>Fungi</taxon>
        <taxon>Dikarya</taxon>
        <taxon>Ascomycota</taxon>
        <taxon>Saccharomycotina</taxon>
        <taxon>Saccharomycetes</taxon>
        <taxon>Saccharomycetales</taxon>
        <taxon>Saccharomycetaceae</taxon>
        <taxon>Saccharomyces</taxon>
    </lineage>
</organism>
<feature type="chain" id="PRO_0000068863" description="Cell division control protein 25">
    <location>
        <begin position="1"/>
        <end position="1589"/>
    </location>
</feature>
<feature type="transmembrane region" description="Helical" evidence="1">
    <location>
        <begin position="1452"/>
        <end position="1473"/>
    </location>
</feature>
<feature type="domain" description="SH3" evidence="4">
    <location>
        <begin position="58"/>
        <end position="128"/>
    </location>
</feature>
<feature type="domain" description="N-terminal Ras-GEF" evidence="2">
    <location>
        <begin position="1117"/>
        <end position="1247"/>
    </location>
</feature>
<feature type="domain" description="Ras-GEF" evidence="3">
    <location>
        <begin position="1305"/>
        <end position="1542"/>
    </location>
</feature>
<feature type="region of interest" description="Disordered" evidence="5">
    <location>
        <begin position="1"/>
        <end position="53"/>
    </location>
</feature>
<feature type="region of interest" description="Disordered" evidence="5">
    <location>
        <begin position="121"/>
        <end position="243"/>
    </location>
</feature>
<feature type="region of interest" description="Disordered" evidence="5">
    <location>
        <begin position="359"/>
        <end position="424"/>
    </location>
</feature>
<feature type="region of interest" description="Disordered" evidence="5">
    <location>
        <begin position="553"/>
        <end position="574"/>
    </location>
</feature>
<feature type="region of interest" description="Disordered" evidence="5">
    <location>
        <begin position="1249"/>
        <end position="1287"/>
    </location>
</feature>
<feature type="region of interest" description="Disordered" evidence="5">
    <location>
        <begin position="1570"/>
        <end position="1589"/>
    </location>
</feature>
<feature type="compositionally biased region" description="Polar residues" evidence="5">
    <location>
        <begin position="1"/>
        <end position="14"/>
    </location>
</feature>
<feature type="compositionally biased region" description="Low complexity" evidence="5">
    <location>
        <begin position="20"/>
        <end position="53"/>
    </location>
</feature>
<feature type="compositionally biased region" description="Basic residues" evidence="5">
    <location>
        <begin position="130"/>
        <end position="139"/>
    </location>
</feature>
<feature type="compositionally biased region" description="Low complexity" evidence="5">
    <location>
        <begin position="143"/>
        <end position="158"/>
    </location>
</feature>
<feature type="compositionally biased region" description="Polar residues" evidence="5">
    <location>
        <begin position="173"/>
        <end position="205"/>
    </location>
</feature>
<feature type="compositionally biased region" description="Polar residues" evidence="5">
    <location>
        <begin position="211"/>
        <end position="238"/>
    </location>
</feature>
<feature type="compositionally biased region" description="Basic and acidic residues" evidence="5">
    <location>
        <begin position="359"/>
        <end position="375"/>
    </location>
</feature>
<feature type="compositionally biased region" description="Polar residues" evidence="5">
    <location>
        <begin position="415"/>
        <end position="424"/>
    </location>
</feature>
<feature type="compositionally biased region" description="Basic and acidic residues" evidence="5">
    <location>
        <begin position="1249"/>
        <end position="1259"/>
    </location>
</feature>
<feature type="compositionally biased region" description="Polar residues" evidence="5">
    <location>
        <begin position="1260"/>
        <end position="1269"/>
    </location>
</feature>
<feature type="compositionally biased region" description="Basic residues" evidence="5">
    <location>
        <begin position="1578"/>
        <end position="1589"/>
    </location>
</feature>
<feature type="modified residue" description="Phosphoserine" evidence="10">
    <location>
        <position position="151"/>
    </location>
</feature>
<feature type="modified residue" description="Phosphoserine" evidence="10">
    <location>
        <position position="154"/>
    </location>
</feature>
<feature type="modified residue" description="Phosphoserine" evidence="9">
    <location>
        <position position="423"/>
    </location>
</feature>
<feature type="modified residue" description="Phosphoserine" evidence="10">
    <location>
        <position position="580"/>
    </location>
</feature>
<feature type="modified residue" description="Phosphoserine" evidence="10">
    <location>
        <position position="596"/>
    </location>
</feature>
<feature type="modified residue" description="Phosphoserine" evidence="10">
    <location>
        <position position="632"/>
    </location>
</feature>
<feature type="modified residue" description="Phosphothreonine" evidence="10">
    <location>
        <position position="635"/>
    </location>
</feature>
<feature type="modified residue" description="Phosphoserine" evidence="10">
    <location>
        <position position="649"/>
    </location>
</feature>
<feature type="sequence conflict" description="In Ref. 2; CAA27259." evidence="8" ref="2">
    <original>I</original>
    <variation>Y</variation>
    <location>
        <position position="497"/>
    </location>
</feature>
<feature type="sequence conflict" description="In Ref. 2; CAA27259." evidence="8" ref="2">
    <original>PVGHHEPFKN</original>
    <variation>LSVIMNLSR</variation>
    <location>
        <begin position="954"/>
        <end position="963"/>
    </location>
</feature>
<evidence type="ECO:0000255" key="1"/>
<evidence type="ECO:0000255" key="2">
    <source>
        <dbReference type="PROSITE-ProRule" id="PRU00135"/>
    </source>
</evidence>
<evidence type="ECO:0000255" key="3">
    <source>
        <dbReference type="PROSITE-ProRule" id="PRU00168"/>
    </source>
</evidence>
<evidence type="ECO:0000255" key="4">
    <source>
        <dbReference type="PROSITE-ProRule" id="PRU00192"/>
    </source>
</evidence>
<evidence type="ECO:0000256" key="5">
    <source>
        <dbReference type="SAM" id="MobiDB-lite"/>
    </source>
</evidence>
<evidence type="ECO:0000269" key="6">
    <source>
    </source>
</evidence>
<evidence type="ECO:0000269" key="7">
    <source>
    </source>
</evidence>
<evidence type="ECO:0000305" key="8"/>
<evidence type="ECO:0007744" key="9">
    <source>
    </source>
</evidence>
<evidence type="ECO:0007744" key="10">
    <source>
    </source>
</evidence>
<protein>
    <recommendedName>
        <fullName>Cell division control protein 25</fullName>
    </recommendedName>
</protein>